<comment type="function">
    <text evidence="1">One of the primary rRNA binding proteins, it binds directly to 16S rRNA where it nucleates assembly of the body of the 30S subunit.</text>
</comment>
<comment type="function">
    <text evidence="1">With S5 and S12 plays an important role in translational accuracy.</text>
</comment>
<comment type="subunit">
    <text evidence="1">Part of the 30S ribosomal subunit. Contacts protein S5. The interaction surface between S4 and S5 is involved in control of translational fidelity (By similarity).</text>
</comment>
<comment type="subcellular location">
    <subcellularLocation>
        <location>Plastid</location>
        <location>Chloroplast</location>
    </subcellularLocation>
</comment>
<comment type="similarity">
    <text evidence="3">Belongs to the universal ribosomal protein uS4 family.</text>
</comment>
<name>RR4_SACOF</name>
<geneLocation type="chloroplast"/>
<keyword id="KW-0150">Chloroplast</keyword>
<keyword id="KW-0934">Plastid</keyword>
<keyword id="KW-0687">Ribonucleoprotein</keyword>
<keyword id="KW-0689">Ribosomal protein</keyword>
<keyword id="KW-0694">RNA-binding</keyword>
<keyword id="KW-0699">rRNA-binding</keyword>
<dbReference type="EMBL" id="AP006714">
    <property type="protein sequence ID" value="BAD27295.1"/>
    <property type="molecule type" value="Genomic_DNA"/>
</dbReference>
<dbReference type="RefSeq" id="YP_009389573.1">
    <property type="nucleotide sequence ID" value="NC_035224.1"/>
</dbReference>
<dbReference type="SMR" id="Q6ENW1"/>
<dbReference type="GeneID" id="33347894"/>
<dbReference type="GO" id="GO:0009507">
    <property type="term" value="C:chloroplast"/>
    <property type="evidence" value="ECO:0007669"/>
    <property type="project" value="UniProtKB-SubCell"/>
</dbReference>
<dbReference type="GO" id="GO:0015935">
    <property type="term" value="C:small ribosomal subunit"/>
    <property type="evidence" value="ECO:0007669"/>
    <property type="project" value="InterPro"/>
</dbReference>
<dbReference type="GO" id="GO:0019843">
    <property type="term" value="F:rRNA binding"/>
    <property type="evidence" value="ECO:0007669"/>
    <property type="project" value="UniProtKB-UniRule"/>
</dbReference>
<dbReference type="GO" id="GO:0003735">
    <property type="term" value="F:structural constituent of ribosome"/>
    <property type="evidence" value="ECO:0007669"/>
    <property type="project" value="InterPro"/>
</dbReference>
<dbReference type="GO" id="GO:0042274">
    <property type="term" value="P:ribosomal small subunit biogenesis"/>
    <property type="evidence" value="ECO:0007669"/>
    <property type="project" value="TreeGrafter"/>
</dbReference>
<dbReference type="GO" id="GO:0006412">
    <property type="term" value="P:translation"/>
    <property type="evidence" value="ECO:0007669"/>
    <property type="project" value="UniProtKB-UniRule"/>
</dbReference>
<dbReference type="CDD" id="cd00165">
    <property type="entry name" value="S4"/>
    <property type="match status" value="1"/>
</dbReference>
<dbReference type="FunFam" id="1.10.1050.10:FF:000002">
    <property type="entry name" value="30S ribosomal protein S4, chloroplastic"/>
    <property type="match status" value="1"/>
</dbReference>
<dbReference type="FunFam" id="3.10.290.10:FF:000081">
    <property type="entry name" value="30S ribosomal protein S4, chloroplastic"/>
    <property type="match status" value="1"/>
</dbReference>
<dbReference type="Gene3D" id="1.10.1050.10">
    <property type="entry name" value="Ribosomal Protein S4 Delta 41, Chain A, domain 1"/>
    <property type="match status" value="1"/>
</dbReference>
<dbReference type="Gene3D" id="3.10.290.10">
    <property type="entry name" value="RNA-binding S4 domain"/>
    <property type="match status" value="1"/>
</dbReference>
<dbReference type="HAMAP" id="MF_01306_B">
    <property type="entry name" value="Ribosomal_uS4_B"/>
    <property type="match status" value="1"/>
</dbReference>
<dbReference type="InterPro" id="IPR022801">
    <property type="entry name" value="Ribosomal_uS4"/>
</dbReference>
<dbReference type="InterPro" id="IPR005709">
    <property type="entry name" value="Ribosomal_uS4_bac-type"/>
</dbReference>
<dbReference type="InterPro" id="IPR018079">
    <property type="entry name" value="Ribosomal_uS4_CS"/>
</dbReference>
<dbReference type="InterPro" id="IPR001912">
    <property type="entry name" value="Ribosomal_uS4_N"/>
</dbReference>
<dbReference type="InterPro" id="IPR002942">
    <property type="entry name" value="S4_RNA-bd"/>
</dbReference>
<dbReference type="InterPro" id="IPR036986">
    <property type="entry name" value="S4_RNA-bd_sf"/>
</dbReference>
<dbReference type="NCBIfam" id="NF003717">
    <property type="entry name" value="PRK05327.1"/>
    <property type="match status" value="1"/>
</dbReference>
<dbReference type="NCBIfam" id="TIGR01017">
    <property type="entry name" value="rpsD_bact"/>
    <property type="match status" value="1"/>
</dbReference>
<dbReference type="PANTHER" id="PTHR11831">
    <property type="entry name" value="30S 40S RIBOSOMAL PROTEIN"/>
    <property type="match status" value="1"/>
</dbReference>
<dbReference type="PANTHER" id="PTHR11831:SF4">
    <property type="entry name" value="SMALL RIBOSOMAL SUBUNIT PROTEIN US4M"/>
    <property type="match status" value="1"/>
</dbReference>
<dbReference type="Pfam" id="PF00163">
    <property type="entry name" value="Ribosomal_S4"/>
    <property type="match status" value="1"/>
</dbReference>
<dbReference type="Pfam" id="PF01479">
    <property type="entry name" value="S4"/>
    <property type="match status" value="1"/>
</dbReference>
<dbReference type="SMART" id="SM01390">
    <property type="entry name" value="Ribosomal_S4"/>
    <property type="match status" value="1"/>
</dbReference>
<dbReference type="SMART" id="SM00363">
    <property type="entry name" value="S4"/>
    <property type="match status" value="1"/>
</dbReference>
<dbReference type="SUPFAM" id="SSF55174">
    <property type="entry name" value="Alpha-L RNA-binding motif"/>
    <property type="match status" value="1"/>
</dbReference>
<dbReference type="PROSITE" id="PS00632">
    <property type="entry name" value="RIBOSOMAL_S4"/>
    <property type="match status" value="1"/>
</dbReference>
<dbReference type="PROSITE" id="PS50889">
    <property type="entry name" value="S4"/>
    <property type="match status" value="1"/>
</dbReference>
<sequence length="201" mass="23463">MSRYRGPRLKKIRRLGALPGLTRKTPKSGSNQKKKFHSGKKEQYRIRLQEKQKLRFHYGLTERQLLRYVHIAGKAKRSTGQVLLQLLEMRLDNILFRLGMASTIPGARQLVNHRHILVNGRIVDIPSFRCKPRDIITTKDNQRSKRLVQNYIASSDPGKLPKHLTVDTLQYKGLVKKILDRKWVGLKINELLVVEYYSRQT</sequence>
<feature type="chain" id="PRO_0000132663" description="Small ribosomal subunit protein uS4c">
    <location>
        <begin position="1"/>
        <end position="201"/>
    </location>
</feature>
<feature type="domain" description="S4 RNA-binding">
    <location>
        <begin position="89"/>
        <end position="150"/>
    </location>
</feature>
<feature type="region of interest" description="Disordered" evidence="2">
    <location>
        <begin position="15"/>
        <end position="43"/>
    </location>
</feature>
<protein>
    <recommendedName>
        <fullName evidence="3">Small ribosomal subunit protein uS4c</fullName>
    </recommendedName>
    <alternativeName>
        <fullName>30S ribosomal protein S4, chloroplastic</fullName>
    </alternativeName>
</protein>
<gene>
    <name type="primary">rps4</name>
</gene>
<organism>
    <name type="scientific">Saccharum officinarum</name>
    <name type="common">Sugarcane</name>
    <dbReference type="NCBI Taxonomy" id="4547"/>
    <lineage>
        <taxon>Eukaryota</taxon>
        <taxon>Viridiplantae</taxon>
        <taxon>Streptophyta</taxon>
        <taxon>Embryophyta</taxon>
        <taxon>Tracheophyta</taxon>
        <taxon>Spermatophyta</taxon>
        <taxon>Magnoliopsida</taxon>
        <taxon>Liliopsida</taxon>
        <taxon>Poales</taxon>
        <taxon>Poaceae</taxon>
        <taxon>PACMAD clade</taxon>
        <taxon>Panicoideae</taxon>
        <taxon>Andropogonodae</taxon>
        <taxon>Andropogoneae</taxon>
        <taxon>Saccharinae</taxon>
        <taxon>Saccharum</taxon>
        <taxon>Saccharum officinarum species complex</taxon>
    </lineage>
</organism>
<proteinExistence type="inferred from homology"/>
<accession>Q6ENW1</accession>
<evidence type="ECO:0000250" key="1"/>
<evidence type="ECO:0000256" key="2">
    <source>
        <dbReference type="SAM" id="MobiDB-lite"/>
    </source>
</evidence>
<evidence type="ECO:0000305" key="3"/>
<reference key="1">
    <citation type="journal article" date="2004" name="DNA Res.">
        <title>Complete nucleotide sequence of the sugarcane (Saccharum officinarum) chloroplast genome: a comparative analysis of four monocot chloroplast genomes.</title>
        <authorList>
            <person name="Asano T."/>
            <person name="Tsudzuki T."/>
            <person name="Takahashi S."/>
            <person name="Shimada H."/>
            <person name="Kadowaki K."/>
        </authorList>
    </citation>
    <scope>NUCLEOTIDE SEQUENCE [LARGE SCALE GENOMIC DNA]</scope>
</reference>